<name>QUEF_NEIMF</name>
<keyword id="KW-0963">Cytoplasm</keyword>
<keyword id="KW-0521">NADP</keyword>
<keyword id="KW-0560">Oxidoreductase</keyword>
<keyword id="KW-0671">Queuosine biosynthesis</keyword>
<dbReference type="EC" id="1.7.1.13" evidence="1"/>
<dbReference type="EMBL" id="AM421808">
    <property type="protein sequence ID" value="CAM11020.1"/>
    <property type="molecule type" value="Genomic_DNA"/>
</dbReference>
<dbReference type="RefSeq" id="WP_002212283.1">
    <property type="nucleotide sequence ID" value="NC_008767.1"/>
</dbReference>
<dbReference type="SMR" id="A1KVW5"/>
<dbReference type="KEGG" id="nmc:NMC1854"/>
<dbReference type="HOGENOM" id="CLU_102489_0_1_4"/>
<dbReference type="UniPathway" id="UPA00392"/>
<dbReference type="Proteomes" id="UP000002286">
    <property type="component" value="Chromosome"/>
</dbReference>
<dbReference type="GO" id="GO:0005737">
    <property type="term" value="C:cytoplasm"/>
    <property type="evidence" value="ECO:0007669"/>
    <property type="project" value="UniProtKB-SubCell"/>
</dbReference>
<dbReference type="GO" id="GO:0033739">
    <property type="term" value="F:preQ1 synthase activity"/>
    <property type="evidence" value="ECO:0007669"/>
    <property type="project" value="UniProtKB-UniRule"/>
</dbReference>
<dbReference type="GO" id="GO:0008616">
    <property type="term" value="P:queuosine biosynthetic process"/>
    <property type="evidence" value="ECO:0007669"/>
    <property type="project" value="UniProtKB-UniRule"/>
</dbReference>
<dbReference type="GO" id="GO:0006400">
    <property type="term" value="P:tRNA modification"/>
    <property type="evidence" value="ECO:0007669"/>
    <property type="project" value="UniProtKB-UniRule"/>
</dbReference>
<dbReference type="Gene3D" id="3.30.1130.10">
    <property type="match status" value="1"/>
</dbReference>
<dbReference type="HAMAP" id="MF_00818">
    <property type="entry name" value="QueF_type1"/>
    <property type="match status" value="1"/>
</dbReference>
<dbReference type="InterPro" id="IPR043133">
    <property type="entry name" value="GTP-CH-I_C/QueF"/>
</dbReference>
<dbReference type="InterPro" id="IPR050084">
    <property type="entry name" value="NADPH_dep_7-cyano-7-deazaG_red"/>
</dbReference>
<dbReference type="InterPro" id="IPR029500">
    <property type="entry name" value="QueF"/>
</dbReference>
<dbReference type="InterPro" id="IPR016856">
    <property type="entry name" value="QueF_type1"/>
</dbReference>
<dbReference type="NCBIfam" id="TIGR03139">
    <property type="entry name" value="QueF-II"/>
    <property type="match status" value="1"/>
</dbReference>
<dbReference type="PANTHER" id="PTHR34354">
    <property type="entry name" value="NADPH-DEPENDENT 7-CYANO-7-DEAZAGUANINE REDUCTASE"/>
    <property type="match status" value="1"/>
</dbReference>
<dbReference type="PANTHER" id="PTHR34354:SF1">
    <property type="entry name" value="NADPH-DEPENDENT 7-CYANO-7-DEAZAGUANINE REDUCTASE"/>
    <property type="match status" value="1"/>
</dbReference>
<dbReference type="Pfam" id="PF14489">
    <property type="entry name" value="QueF"/>
    <property type="match status" value="1"/>
</dbReference>
<dbReference type="PIRSF" id="PIRSF027377">
    <property type="entry name" value="Nitrile_oxidored_QueF"/>
    <property type="match status" value="1"/>
</dbReference>
<dbReference type="SUPFAM" id="SSF55620">
    <property type="entry name" value="Tetrahydrobiopterin biosynthesis enzymes-like"/>
    <property type="match status" value="1"/>
</dbReference>
<evidence type="ECO:0000255" key="1">
    <source>
        <dbReference type="HAMAP-Rule" id="MF_00818"/>
    </source>
</evidence>
<comment type="function">
    <text evidence="1">Catalyzes the NADPH-dependent reduction of 7-cyano-7-deazaguanine (preQ0) to 7-aminomethyl-7-deazaguanine (preQ1).</text>
</comment>
<comment type="catalytic activity">
    <reaction evidence="1">
        <text>7-aminomethyl-7-carbaguanine + 2 NADP(+) = 7-cyano-7-deazaguanine + 2 NADPH + 3 H(+)</text>
        <dbReference type="Rhea" id="RHEA:13409"/>
        <dbReference type="ChEBI" id="CHEBI:15378"/>
        <dbReference type="ChEBI" id="CHEBI:45075"/>
        <dbReference type="ChEBI" id="CHEBI:57783"/>
        <dbReference type="ChEBI" id="CHEBI:58349"/>
        <dbReference type="ChEBI" id="CHEBI:58703"/>
        <dbReference type="EC" id="1.7.1.13"/>
    </reaction>
</comment>
<comment type="pathway">
    <text evidence="1">tRNA modification; tRNA-queuosine biosynthesis.</text>
</comment>
<comment type="subcellular location">
    <subcellularLocation>
        <location evidence="1">Cytoplasm</location>
    </subcellularLocation>
</comment>
<comment type="similarity">
    <text evidence="1">Belongs to the GTP cyclohydrolase I family. QueF type 1 subfamily.</text>
</comment>
<accession>A1KVW5</accession>
<reference key="1">
    <citation type="journal article" date="2007" name="PLoS Genet.">
        <title>Meningococcal genetic variation mechanisms viewed through comparative analysis of serogroup C strain FAM18.</title>
        <authorList>
            <person name="Bentley S.D."/>
            <person name="Vernikos G.S."/>
            <person name="Snyder L.A.S."/>
            <person name="Churcher C."/>
            <person name="Arrowsmith C."/>
            <person name="Chillingworth T."/>
            <person name="Cronin A."/>
            <person name="Davis P.H."/>
            <person name="Holroyd N.E."/>
            <person name="Jagels K."/>
            <person name="Maddison M."/>
            <person name="Moule S."/>
            <person name="Rabbinowitsch E."/>
            <person name="Sharp S."/>
            <person name="Unwin L."/>
            <person name="Whitehead S."/>
            <person name="Quail M.A."/>
            <person name="Achtman M."/>
            <person name="Barrell B.G."/>
            <person name="Saunders N.J."/>
            <person name="Parkhill J."/>
        </authorList>
    </citation>
    <scope>NUCLEOTIDE SEQUENCE [LARGE SCALE GENOMIC DNA]</scope>
    <source>
        <strain>ATCC 700532 / DSM 15464 / FAM18</strain>
    </source>
</reference>
<protein>
    <recommendedName>
        <fullName evidence="1">NADPH-dependent 7-cyano-7-deazaguanine reductase</fullName>
        <ecNumber evidence="1">1.7.1.13</ecNumber>
    </recommendedName>
    <alternativeName>
        <fullName evidence="1">7-cyano-7-carbaguanine reductase</fullName>
    </alternativeName>
    <alternativeName>
        <fullName evidence="1">NADPH-dependent nitrile oxidoreductase</fullName>
    </alternativeName>
    <alternativeName>
        <fullName evidence="1">PreQ(0) reductase</fullName>
    </alternativeName>
</protein>
<proteinExistence type="inferred from homology"/>
<feature type="chain" id="PRO_1000062395" description="NADPH-dependent 7-cyano-7-deazaguanine reductase">
    <location>
        <begin position="1"/>
        <end position="157"/>
    </location>
</feature>
<feature type="active site" description="Thioimide intermediate" evidence="1">
    <location>
        <position position="55"/>
    </location>
</feature>
<feature type="active site" description="Proton donor" evidence="1">
    <location>
        <position position="62"/>
    </location>
</feature>
<feature type="binding site" evidence="1">
    <location>
        <begin position="77"/>
        <end position="79"/>
    </location>
    <ligand>
        <name>substrate</name>
    </ligand>
</feature>
<feature type="binding site" evidence="1">
    <location>
        <begin position="96"/>
        <end position="97"/>
    </location>
    <ligand>
        <name>substrate</name>
    </ligand>
</feature>
<organism>
    <name type="scientific">Neisseria meningitidis serogroup C / serotype 2a (strain ATCC 700532 / DSM 15464 / FAM18)</name>
    <dbReference type="NCBI Taxonomy" id="272831"/>
    <lineage>
        <taxon>Bacteria</taxon>
        <taxon>Pseudomonadati</taxon>
        <taxon>Pseudomonadota</taxon>
        <taxon>Betaproteobacteria</taxon>
        <taxon>Neisseriales</taxon>
        <taxon>Neisseriaceae</taxon>
        <taxon>Neisseria</taxon>
    </lineage>
</organism>
<sequence>MSRNTEELQGISLLGNQKTRYPTGYAPEILEAFDNKHPDNDYFVKFVCPEFTSLCPMTGQPDFATIYIRYIPHIKMVESKSLKLYLFSFRNHGDFHEDCVNIIMKDLIALMDPKYIEVFGEFTPRGGIAIHPFANYGKAGTEFETLARKRLFEHDSQ</sequence>
<gene>
    <name evidence="1" type="primary">queF</name>
    <name type="ordered locus">NMC1854</name>
</gene>